<name>FTHS_SACEN</name>
<comment type="catalytic activity">
    <reaction evidence="1">
        <text>(6S)-5,6,7,8-tetrahydrofolate + formate + ATP = (6R)-10-formyltetrahydrofolate + ADP + phosphate</text>
        <dbReference type="Rhea" id="RHEA:20221"/>
        <dbReference type="ChEBI" id="CHEBI:15740"/>
        <dbReference type="ChEBI" id="CHEBI:30616"/>
        <dbReference type="ChEBI" id="CHEBI:43474"/>
        <dbReference type="ChEBI" id="CHEBI:57453"/>
        <dbReference type="ChEBI" id="CHEBI:195366"/>
        <dbReference type="ChEBI" id="CHEBI:456216"/>
        <dbReference type="EC" id="6.3.4.3"/>
    </reaction>
</comment>
<comment type="pathway">
    <text evidence="1">One-carbon metabolism; tetrahydrofolate interconversion.</text>
</comment>
<comment type="similarity">
    <text evidence="1">Belongs to the formate--tetrahydrofolate ligase family.</text>
</comment>
<sequence>MTVPSDLDISRATALRPLEDIAAQLGLGPHLLEPYGHNVAKISLDAIEELSDRPQARYVVVSAITPTPLGEGKTTTTVGLGQALRHLGKVSAVAVRQPSMGPTFGIKGGAAGGGYSQVVPMEALNLHLTGDMHAVTAAHNLLSAMLDNHLHKGNRLGVDPHRITWRRVLDVNDRDLRNIVTGMGGRADGTPRQTGFDITAASEVMAVLALSTSLRDMRRRLGRIVVGYTRDGSPVTAEDLRAAGAMTAIMREAIKPNLMQTTENTPVLVHAGPFGNIAHGNSSVVADRIAGRCADYLVTEAGFGADMGAERFFNIKCRTSGMRPDAAVLVATVRALKAHSGRYKVVAGRPLPPEMLAENPDDVLAGAENLRKQIDNIRLHGVSPVVAVNAFPTDHGSEHDAIRRVAEEEGARVAVSNHYSEGGKGALELAEVVVEAAEEPNRFRLLYPDSADLRTKIETIATRVYGADGVSYQPAAARALADYEAIGFGSLPVCIAKTHLSLSSDPSLLGAPTGWTLPVREVRASIGAGFIYAICGEMRTMPGLGSHPAAERIDIDEHGQIVGLS</sequence>
<reference key="1">
    <citation type="journal article" date="2007" name="Nat. Biotechnol.">
        <title>Complete genome sequence of the erythromycin-producing bacterium Saccharopolyspora erythraea NRRL23338.</title>
        <authorList>
            <person name="Oliynyk M."/>
            <person name="Samborskyy M."/>
            <person name="Lester J.B."/>
            <person name="Mironenko T."/>
            <person name="Scott N."/>
            <person name="Dickens S."/>
            <person name="Haydock S.F."/>
            <person name="Leadlay P.F."/>
        </authorList>
    </citation>
    <scope>NUCLEOTIDE SEQUENCE [LARGE SCALE GENOMIC DNA]</scope>
    <source>
        <strain>ATCC 11635 / DSM 40517 / JCM 4748 / NBRC 13426 / NCIMB 8594 / NRRL 2338</strain>
    </source>
</reference>
<protein>
    <recommendedName>
        <fullName evidence="1">Formate--tetrahydrofolate ligase</fullName>
        <ecNumber evidence="1">6.3.4.3</ecNumber>
    </recommendedName>
    <alternativeName>
        <fullName evidence="1">Formyltetrahydrofolate synthetase</fullName>
        <shortName evidence="1">FHS</shortName>
        <shortName evidence="1">FTHFS</shortName>
    </alternativeName>
</protein>
<gene>
    <name evidence="1" type="primary">fhs</name>
    <name type="ordered locus">SACE_5619</name>
</gene>
<evidence type="ECO:0000255" key="1">
    <source>
        <dbReference type="HAMAP-Rule" id="MF_01543"/>
    </source>
</evidence>
<feature type="chain" id="PRO_0000293057" description="Formate--tetrahydrofolate ligase">
    <location>
        <begin position="1"/>
        <end position="565"/>
    </location>
</feature>
<feature type="binding site" evidence="1">
    <location>
        <begin position="67"/>
        <end position="74"/>
    </location>
    <ligand>
        <name>ATP</name>
        <dbReference type="ChEBI" id="CHEBI:30616"/>
    </ligand>
</feature>
<accession>A4FL80</accession>
<organism>
    <name type="scientific">Saccharopolyspora erythraea (strain ATCC 11635 / DSM 40517 / JCM 4748 / NBRC 13426 / NCIMB 8594 / NRRL 2338)</name>
    <dbReference type="NCBI Taxonomy" id="405948"/>
    <lineage>
        <taxon>Bacteria</taxon>
        <taxon>Bacillati</taxon>
        <taxon>Actinomycetota</taxon>
        <taxon>Actinomycetes</taxon>
        <taxon>Pseudonocardiales</taxon>
        <taxon>Pseudonocardiaceae</taxon>
        <taxon>Saccharopolyspora</taxon>
    </lineage>
</organism>
<keyword id="KW-0067">ATP-binding</keyword>
<keyword id="KW-0436">Ligase</keyword>
<keyword id="KW-0547">Nucleotide-binding</keyword>
<keyword id="KW-0554">One-carbon metabolism</keyword>
<keyword id="KW-1185">Reference proteome</keyword>
<proteinExistence type="inferred from homology"/>
<dbReference type="EC" id="6.3.4.3" evidence="1"/>
<dbReference type="EMBL" id="AM420293">
    <property type="protein sequence ID" value="CAM04805.1"/>
    <property type="molecule type" value="Genomic_DNA"/>
</dbReference>
<dbReference type="RefSeq" id="WP_009944604.1">
    <property type="nucleotide sequence ID" value="NC_009142.1"/>
</dbReference>
<dbReference type="SMR" id="A4FL80"/>
<dbReference type="STRING" id="405948.SACE_5619"/>
<dbReference type="KEGG" id="sen:SACE_5619"/>
<dbReference type="eggNOG" id="COG2759">
    <property type="taxonomic scope" value="Bacteria"/>
</dbReference>
<dbReference type="HOGENOM" id="CLU_003601_3_3_11"/>
<dbReference type="OrthoDB" id="9761733at2"/>
<dbReference type="UniPathway" id="UPA00193"/>
<dbReference type="Proteomes" id="UP000006728">
    <property type="component" value="Chromosome"/>
</dbReference>
<dbReference type="GO" id="GO:0005524">
    <property type="term" value="F:ATP binding"/>
    <property type="evidence" value="ECO:0007669"/>
    <property type="project" value="UniProtKB-UniRule"/>
</dbReference>
<dbReference type="GO" id="GO:0004329">
    <property type="term" value="F:formate-tetrahydrofolate ligase activity"/>
    <property type="evidence" value="ECO:0007669"/>
    <property type="project" value="UniProtKB-UniRule"/>
</dbReference>
<dbReference type="GO" id="GO:0035999">
    <property type="term" value="P:tetrahydrofolate interconversion"/>
    <property type="evidence" value="ECO:0007669"/>
    <property type="project" value="UniProtKB-UniRule"/>
</dbReference>
<dbReference type="CDD" id="cd00477">
    <property type="entry name" value="FTHFS"/>
    <property type="match status" value="1"/>
</dbReference>
<dbReference type="FunFam" id="3.30.1510.10:FF:000001">
    <property type="entry name" value="Formate--tetrahydrofolate ligase"/>
    <property type="match status" value="1"/>
</dbReference>
<dbReference type="FunFam" id="3.10.410.10:FF:000001">
    <property type="entry name" value="Putative formate--tetrahydrofolate ligase"/>
    <property type="match status" value="1"/>
</dbReference>
<dbReference type="Gene3D" id="3.30.1510.10">
    <property type="entry name" value="Domain 2, N(10)-formyltetrahydrofolate synthetase"/>
    <property type="match status" value="1"/>
</dbReference>
<dbReference type="Gene3D" id="3.10.410.10">
    <property type="entry name" value="Formyltetrahydrofolate synthetase, domain 3"/>
    <property type="match status" value="1"/>
</dbReference>
<dbReference type="Gene3D" id="3.40.50.300">
    <property type="entry name" value="P-loop containing nucleotide triphosphate hydrolases"/>
    <property type="match status" value="1"/>
</dbReference>
<dbReference type="HAMAP" id="MF_01543">
    <property type="entry name" value="FTHFS"/>
    <property type="match status" value="1"/>
</dbReference>
<dbReference type="InterPro" id="IPR000559">
    <property type="entry name" value="Formate_THF_ligase"/>
</dbReference>
<dbReference type="InterPro" id="IPR020628">
    <property type="entry name" value="Formate_THF_ligase_CS"/>
</dbReference>
<dbReference type="InterPro" id="IPR027417">
    <property type="entry name" value="P-loop_NTPase"/>
</dbReference>
<dbReference type="NCBIfam" id="NF010030">
    <property type="entry name" value="PRK13505.1"/>
    <property type="match status" value="1"/>
</dbReference>
<dbReference type="Pfam" id="PF01268">
    <property type="entry name" value="FTHFS"/>
    <property type="match status" value="1"/>
</dbReference>
<dbReference type="SUPFAM" id="SSF52540">
    <property type="entry name" value="P-loop containing nucleoside triphosphate hydrolases"/>
    <property type="match status" value="1"/>
</dbReference>
<dbReference type="PROSITE" id="PS00721">
    <property type="entry name" value="FTHFS_1"/>
    <property type="match status" value="1"/>
</dbReference>
<dbReference type="PROSITE" id="PS00722">
    <property type="entry name" value="FTHFS_2"/>
    <property type="match status" value="1"/>
</dbReference>